<proteinExistence type="inferred from homology"/>
<accession>A6WYL7</accession>
<reference key="1">
    <citation type="journal article" date="2011" name="J. Bacteriol.">
        <title>Genome of Ochrobactrum anthropi ATCC 49188 T, a versatile opportunistic pathogen and symbiont of several eukaryotic hosts.</title>
        <authorList>
            <person name="Chain P.S."/>
            <person name="Lang D.M."/>
            <person name="Comerci D.J."/>
            <person name="Malfatti S.A."/>
            <person name="Vergez L.M."/>
            <person name="Shin M."/>
            <person name="Ugalde R.A."/>
            <person name="Garcia E."/>
            <person name="Tolmasky M.E."/>
        </authorList>
    </citation>
    <scope>NUCLEOTIDE SEQUENCE [LARGE SCALE GENOMIC DNA]</scope>
    <source>
        <strain>ATCC 49188 / DSM 6882 / CCUG 24695 / JCM 21032 / LMG 3331 / NBRC 15819 / NCTC 12168 / Alc 37</strain>
    </source>
</reference>
<protein>
    <recommendedName>
        <fullName evidence="1">2,3,4,5-tetrahydropyridine-2,6-dicarboxylate N-succinyltransferase</fullName>
        <ecNumber evidence="1">2.3.1.117</ecNumber>
    </recommendedName>
    <alternativeName>
        <fullName evidence="1">Tetrahydrodipicolinate N-succinyltransferase</fullName>
        <shortName evidence="1">THDP succinyltransferase</shortName>
        <shortName evidence="1">THP succinyltransferase</shortName>
        <shortName evidence="1">Tetrahydropicolinate succinylase</shortName>
    </alternativeName>
</protein>
<keyword id="KW-0012">Acyltransferase</keyword>
<keyword id="KW-0028">Amino-acid biosynthesis</keyword>
<keyword id="KW-0963">Cytoplasm</keyword>
<keyword id="KW-0220">Diaminopimelate biosynthesis</keyword>
<keyword id="KW-0457">Lysine biosynthesis</keyword>
<keyword id="KW-1185">Reference proteome</keyword>
<keyword id="KW-0677">Repeat</keyword>
<keyword id="KW-0808">Transferase</keyword>
<organism>
    <name type="scientific">Brucella anthropi (strain ATCC 49188 / DSM 6882 / CCUG 24695 / JCM 21032 / LMG 3331 / NBRC 15819 / NCTC 12168 / Alc 37)</name>
    <name type="common">Ochrobactrum anthropi</name>
    <dbReference type="NCBI Taxonomy" id="439375"/>
    <lineage>
        <taxon>Bacteria</taxon>
        <taxon>Pseudomonadati</taxon>
        <taxon>Pseudomonadota</taxon>
        <taxon>Alphaproteobacteria</taxon>
        <taxon>Hyphomicrobiales</taxon>
        <taxon>Brucellaceae</taxon>
        <taxon>Brucella/Ochrobactrum group</taxon>
        <taxon>Brucella</taxon>
    </lineage>
</organism>
<comment type="catalytic activity">
    <reaction evidence="1">
        <text>(S)-2,3,4,5-tetrahydrodipicolinate + succinyl-CoA + H2O = (S)-2-succinylamino-6-oxoheptanedioate + CoA</text>
        <dbReference type="Rhea" id="RHEA:17325"/>
        <dbReference type="ChEBI" id="CHEBI:15377"/>
        <dbReference type="ChEBI" id="CHEBI:15685"/>
        <dbReference type="ChEBI" id="CHEBI:16845"/>
        <dbReference type="ChEBI" id="CHEBI:57287"/>
        <dbReference type="ChEBI" id="CHEBI:57292"/>
        <dbReference type="EC" id="2.3.1.117"/>
    </reaction>
</comment>
<comment type="pathway">
    <text evidence="1">Amino-acid biosynthesis; L-lysine biosynthesis via DAP pathway; LL-2,6-diaminopimelate from (S)-tetrahydrodipicolinate (succinylase route): step 1/3.</text>
</comment>
<comment type="subunit">
    <text evidence="1">Homotrimer.</text>
</comment>
<comment type="subcellular location">
    <subcellularLocation>
        <location evidence="1">Cytoplasm</location>
    </subcellularLocation>
</comment>
<comment type="similarity">
    <text evidence="1">Belongs to the transferase hexapeptide repeat family.</text>
</comment>
<sequence length="284" mass="30733">MTKPDLASLEKTIDKAFDERDGINTATRGEVREAVEQSLVLLDRGEARVAEKQADGNWQVNQWLKKAVLLSFRLNPMEVIKGGPGQSSWWDKVPSKFDGWTANEFEKAGFRAVPNCIVRHSAYIAPNAILMPSFVNLGAYVDEGTMVDTWATVGSCAQIGKNVHLSGGVGIGGVLEPMQAGPTIIEDNCFIGARSEVVEGCIVREGSVLGMGVFIGKSTKIVDRATGEVFYGEVPPYSVVVAGTMPGKNVPGENWGPSLYCAVIVKRVDEKTRSKTSINELLRD</sequence>
<dbReference type="EC" id="2.3.1.117" evidence="1"/>
<dbReference type="EMBL" id="CP000758">
    <property type="protein sequence ID" value="ABS14071.1"/>
    <property type="molecule type" value="Genomic_DNA"/>
</dbReference>
<dbReference type="RefSeq" id="WP_010659422.1">
    <property type="nucleotide sequence ID" value="NC_009667.1"/>
</dbReference>
<dbReference type="SMR" id="A6WYL7"/>
<dbReference type="STRING" id="439375.Oant_1354"/>
<dbReference type="GeneID" id="61318142"/>
<dbReference type="KEGG" id="oan:Oant_1354"/>
<dbReference type="eggNOG" id="COG2171">
    <property type="taxonomic scope" value="Bacteria"/>
</dbReference>
<dbReference type="HOGENOM" id="CLU_050859_0_1_5"/>
<dbReference type="PhylomeDB" id="A6WYL7"/>
<dbReference type="UniPathway" id="UPA00034">
    <property type="reaction ID" value="UER00019"/>
</dbReference>
<dbReference type="Proteomes" id="UP000002301">
    <property type="component" value="Chromosome 1"/>
</dbReference>
<dbReference type="GO" id="GO:0005737">
    <property type="term" value="C:cytoplasm"/>
    <property type="evidence" value="ECO:0007669"/>
    <property type="project" value="UniProtKB-SubCell"/>
</dbReference>
<dbReference type="GO" id="GO:0008666">
    <property type="term" value="F:2,3,4,5-tetrahydropyridine-2,6-dicarboxylate N-succinyltransferase activity"/>
    <property type="evidence" value="ECO:0007669"/>
    <property type="project" value="UniProtKB-UniRule"/>
</dbReference>
<dbReference type="GO" id="GO:0016779">
    <property type="term" value="F:nucleotidyltransferase activity"/>
    <property type="evidence" value="ECO:0007669"/>
    <property type="project" value="TreeGrafter"/>
</dbReference>
<dbReference type="GO" id="GO:0019877">
    <property type="term" value="P:diaminopimelate biosynthetic process"/>
    <property type="evidence" value="ECO:0007669"/>
    <property type="project" value="UniProtKB-UniRule"/>
</dbReference>
<dbReference type="GO" id="GO:0009089">
    <property type="term" value="P:lysine biosynthetic process via diaminopimelate"/>
    <property type="evidence" value="ECO:0007669"/>
    <property type="project" value="UniProtKB-UniRule"/>
</dbReference>
<dbReference type="CDD" id="cd03350">
    <property type="entry name" value="LbH_THP_succinylT"/>
    <property type="match status" value="1"/>
</dbReference>
<dbReference type="Gene3D" id="2.160.10.10">
    <property type="entry name" value="Hexapeptide repeat proteins"/>
    <property type="match status" value="1"/>
</dbReference>
<dbReference type="Gene3D" id="1.10.166.10">
    <property type="entry name" value="Tetrahydrodipicolinate-N-succinyltransferase, N-terminal domain"/>
    <property type="match status" value="1"/>
</dbReference>
<dbReference type="HAMAP" id="MF_00811">
    <property type="entry name" value="DapD"/>
    <property type="match status" value="1"/>
</dbReference>
<dbReference type="InterPro" id="IPR005664">
    <property type="entry name" value="DapD_Trfase_Hexpep_rpt_fam"/>
</dbReference>
<dbReference type="InterPro" id="IPR001451">
    <property type="entry name" value="Hexapep"/>
</dbReference>
<dbReference type="InterPro" id="IPR018357">
    <property type="entry name" value="Hexapep_transf_CS"/>
</dbReference>
<dbReference type="InterPro" id="IPR023180">
    <property type="entry name" value="THP_succinylTrfase_dom1"/>
</dbReference>
<dbReference type="InterPro" id="IPR037133">
    <property type="entry name" value="THP_succinylTrfase_N_sf"/>
</dbReference>
<dbReference type="InterPro" id="IPR011004">
    <property type="entry name" value="Trimer_LpxA-like_sf"/>
</dbReference>
<dbReference type="NCBIfam" id="TIGR00965">
    <property type="entry name" value="dapD"/>
    <property type="match status" value="1"/>
</dbReference>
<dbReference type="NCBIfam" id="NF008808">
    <property type="entry name" value="PRK11830.1"/>
    <property type="match status" value="1"/>
</dbReference>
<dbReference type="PANTHER" id="PTHR19136:SF52">
    <property type="entry name" value="2,3,4,5-TETRAHYDROPYRIDINE-2,6-DICARBOXYLATE N-SUCCINYLTRANSFERASE"/>
    <property type="match status" value="1"/>
</dbReference>
<dbReference type="PANTHER" id="PTHR19136">
    <property type="entry name" value="MOLYBDENUM COFACTOR GUANYLYLTRANSFERASE"/>
    <property type="match status" value="1"/>
</dbReference>
<dbReference type="Pfam" id="PF14602">
    <property type="entry name" value="Hexapep_2"/>
    <property type="match status" value="1"/>
</dbReference>
<dbReference type="Pfam" id="PF14805">
    <property type="entry name" value="THDPS_N_2"/>
    <property type="match status" value="1"/>
</dbReference>
<dbReference type="SUPFAM" id="SSF51161">
    <property type="entry name" value="Trimeric LpxA-like enzymes"/>
    <property type="match status" value="1"/>
</dbReference>
<dbReference type="PROSITE" id="PS00101">
    <property type="entry name" value="HEXAPEP_TRANSFERASES"/>
    <property type="match status" value="1"/>
</dbReference>
<gene>
    <name evidence="1" type="primary">dapD</name>
    <name type="ordered locus">Oant_1354</name>
</gene>
<name>DAPD_BRUA4</name>
<feature type="chain" id="PRO_1000047160" description="2,3,4,5-tetrahydropyridine-2,6-dicarboxylate N-succinyltransferase">
    <location>
        <begin position="1"/>
        <end position="284"/>
    </location>
</feature>
<feature type="binding site" evidence="1">
    <location>
        <position position="111"/>
    </location>
    <ligand>
        <name>substrate</name>
    </ligand>
</feature>
<feature type="binding site" evidence="1">
    <location>
        <position position="148"/>
    </location>
    <ligand>
        <name>substrate</name>
    </ligand>
</feature>
<evidence type="ECO:0000255" key="1">
    <source>
        <dbReference type="HAMAP-Rule" id="MF_00811"/>
    </source>
</evidence>